<proteinExistence type="inferred from homology"/>
<reference key="1">
    <citation type="journal article" date="2008" name="Nature">
        <title>The Phaeodactylum genome reveals the evolutionary history of diatom genomes.</title>
        <authorList>
            <person name="Bowler C."/>
            <person name="Allen A.E."/>
            <person name="Badger J.H."/>
            <person name="Grimwood J."/>
            <person name="Jabbari K."/>
            <person name="Kuo A."/>
            <person name="Maheswari U."/>
            <person name="Martens C."/>
            <person name="Maumus F."/>
            <person name="Otillar R.P."/>
            <person name="Rayko E."/>
            <person name="Salamov A."/>
            <person name="Vandepoele K."/>
            <person name="Beszteri B."/>
            <person name="Gruber A."/>
            <person name="Heijde M."/>
            <person name="Katinka M."/>
            <person name="Mock T."/>
            <person name="Valentin K."/>
            <person name="Verret F."/>
            <person name="Berges J.A."/>
            <person name="Brownlee C."/>
            <person name="Cadoret J.P."/>
            <person name="Chiovitti A."/>
            <person name="Choi C.J."/>
            <person name="Coesel S."/>
            <person name="De Martino A."/>
            <person name="Detter J.C."/>
            <person name="Durkin C."/>
            <person name="Falciatore A."/>
            <person name="Fournet J."/>
            <person name="Haruta M."/>
            <person name="Huysman M.J."/>
            <person name="Jenkins B.D."/>
            <person name="Jiroutova K."/>
            <person name="Jorgensen R.E."/>
            <person name="Joubert Y."/>
            <person name="Kaplan A."/>
            <person name="Kroger N."/>
            <person name="Kroth P.G."/>
            <person name="La Roche J."/>
            <person name="Lindquist E."/>
            <person name="Lommer M."/>
            <person name="Martin-Jezequel V."/>
            <person name="Lopez P.J."/>
            <person name="Lucas S."/>
            <person name="Mangogna M."/>
            <person name="McGinnis K."/>
            <person name="Medlin L.K."/>
            <person name="Montsant A."/>
            <person name="Oudot-Le Secq M.P."/>
            <person name="Napoli C."/>
            <person name="Obornik M."/>
            <person name="Parker M.S."/>
            <person name="Petit J.L."/>
            <person name="Porcel B.M."/>
            <person name="Poulsen N."/>
            <person name="Robison M."/>
            <person name="Rychlewski L."/>
            <person name="Rynearson T.A."/>
            <person name="Schmutz J."/>
            <person name="Shapiro H."/>
            <person name="Siaut M."/>
            <person name="Stanley M."/>
            <person name="Sussman M.R."/>
            <person name="Taylor A.R."/>
            <person name="Vardi A."/>
            <person name="von Dassow P."/>
            <person name="Vyverman W."/>
            <person name="Willis A."/>
            <person name="Wyrwicz L.S."/>
            <person name="Rokhsar D.S."/>
            <person name="Weissenbach J."/>
            <person name="Armbrust E.V."/>
            <person name="Green B.R."/>
            <person name="Van de Peer Y."/>
            <person name="Grigoriev I.V."/>
        </authorList>
    </citation>
    <scope>NUCLEOTIDE SEQUENCE [LARGE SCALE GENOMIC DNA]</scope>
    <source>
        <strain>CCAP 1055/1</strain>
    </source>
</reference>
<reference key="2">
    <citation type="submission" date="2008-08" db="EMBL/GenBank/DDBJ databases">
        <authorList>
            <consortium name="Diatom Consortium"/>
            <person name="Grigoriev I."/>
            <person name="Grimwood J."/>
            <person name="Kuo A."/>
            <person name="Otillar R.P."/>
            <person name="Salamov A."/>
            <person name="Detter J.C."/>
            <person name="Lindquist E."/>
            <person name="Shapiro H."/>
            <person name="Lucas S."/>
            <person name="Glavina del Rio T."/>
            <person name="Pitluck S."/>
            <person name="Rokhsar D."/>
            <person name="Bowler C."/>
        </authorList>
    </citation>
    <scope>GENOME REANNOTATION</scope>
    <source>
        <strain>CCAP 1055/1</strain>
    </source>
</reference>
<gene>
    <name type="ORF">PHATRDRAFT_44373</name>
</gene>
<sequence length="436" mass="49899">MLDPVEASSVPVVDDSTIRSLSDFPDRNVFRREDRYPALNIPVRRTAELRKTLKHVLWRRPKTKNVYDDETDPQRRILVLANIDEDAFRDETVQRLIQHEDCRKASYTVTTAYENYTVEEILKQLLPNESEIPSAFEMVGHLAHVNLRSSQLPFKYWIGKVMLDKNQPRIRTVVNKLGTIETEYRTFGMEVIAGYQGENWSVVTVKEERCTFRLDFTKVYWNSRLAGEHRRLVQQILKESQTKPLVVADLMAGVGPFAVPLTASHGRRNQVTVYANDLNPESYKYLLQNVQSNKCTNIHCYNQCGRAMVHQLQAENIEVDHVIMNLPASAPEFLDAFRGYEGVKRPCIHVHCFAPKASEATDYQDALDRCSSALGCTLDRISNDVHVHVVRDVSPNKNMLSVSFLLPVETQSLVKMKLQPLRTETSEPGAKRIKSN</sequence>
<feature type="chain" id="PRO_0000414153" description="tRNA (guanine(37)-N(1))-methyltransferase 1">
    <location>
        <begin position="1"/>
        <end position="436"/>
    </location>
</feature>
<feature type="binding site" evidence="1">
    <location>
        <position position="229"/>
    </location>
    <ligand>
        <name>S-adenosyl-L-methionine</name>
        <dbReference type="ChEBI" id="CHEBI:59789"/>
    </ligand>
</feature>
<feature type="binding site" evidence="1">
    <location>
        <begin position="277"/>
        <end position="278"/>
    </location>
    <ligand>
        <name>S-adenosyl-L-methionine</name>
        <dbReference type="ChEBI" id="CHEBI:59789"/>
    </ligand>
</feature>
<feature type="binding site" evidence="1">
    <location>
        <position position="325"/>
    </location>
    <ligand>
        <name>S-adenosyl-L-methionine</name>
        <dbReference type="ChEBI" id="CHEBI:59789"/>
    </ligand>
</feature>
<name>TRM51_PHATC</name>
<accession>B7FTW3</accession>
<evidence type="ECO:0000255" key="1">
    <source>
        <dbReference type="HAMAP-Rule" id="MF_03152"/>
    </source>
</evidence>
<evidence type="ECO:0000305" key="2"/>
<organism>
    <name type="scientific">Phaeodactylum tricornutum (strain CCAP 1055/1)</name>
    <dbReference type="NCBI Taxonomy" id="556484"/>
    <lineage>
        <taxon>Eukaryota</taxon>
        <taxon>Sar</taxon>
        <taxon>Stramenopiles</taxon>
        <taxon>Ochrophyta</taxon>
        <taxon>Bacillariophyta</taxon>
        <taxon>Bacillariophyceae</taxon>
        <taxon>Bacillariophycidae</taxon>
        <taxon>Naviculales</taxon>
        <taxon>Phaeodactylaceae</taxon>
        <taxon>Phaeodactylum</taxon>
    </lineage>
</organism>
<protein>
    <recommendedName>
        <fullName evidence="1">tRNA (guanine(37)-N(1))-methyltransferase 1</fullName>
        <ecNumber evidence="1">2.1.1.228</ecNumber>
    </recommendedName>
    <alternativeName>
        <fullName evidence="1">M1G-methyltransferase 1</fullName>
    </alternativeName>
    <alternativeName>
        <fullName evidence="1">tRNA [GM37] methyltransferase 1</fullName>
    </alternativeName>
    <alternativeName>
        <fullName evidence="1">tRNA methyltransferase 5 homolog 1</fullName>
    </alternativeName>
</protein>
<dbReference type="EC" id="2.1.1.228" evidence="1"/>
<dbReference type="EMBL" id="CM000607">
    <property type="protein sequence ID" value="EEC49881.1"/>
    <property type="molecule type" value="Genomic_DNA"/>
</dbReference>
<dbReference type="RefSeq" id="XP_002178216.1">
    <property type="nucleotide sequence ID" value="XM_002178180.1"/>
</dbReference>
<dbReference type="SMR" id="B7FTW3"/>
<dbReference type="STRING" id="556484.B7FTW3"/>
<dbReference type="PaxDb" id="2850-Phatr44373"/>
<dbReference type="EnsemblProtists" id="Phatr3_J44373.t1">
    <property type="protein sequence ID" value="Phatr3_J44373.p1"/>
    <property type="gene ID" value="Phatr3_J44373"/>
</dbReference>
<dbReference type="GeneID" id="7197845"/>
<dbReference type="KEGG" id="pti:PHATRDRAFT_44373"/>
<dbReference type="eggNOG" id="KOG2078">
    <property type="taxonomic scope" value="Eukaryota"/>
</dbReference>
<dbReference type="HOGENOM" id="CLU_022610_2_3_1"/>
<dbReference type="InParanoid" id="B7FTW3"/>
<dbReference type="OMA" id="VGSHSQF"/>
<dbReference type="OrthoDB" id="408788at2759"/>
<dbReference type="Proteomes" id="UP000000759">
    <property type="component" value="Chromosome 4"/>
</dbReference>
<dbReference type="GO" id="GO:0005759">
    <property type="term" value="C:mitochondrial matrix"/>
    <property type="evidence" value="ECO:0007669"/>
    <property type="project" value="UniProtKB-SubCell"/>
</dbReference>
<dbReference type="GO" id="GO:0005634">
    <property type="term" value="C:nucleus"/>
    <property type="evidence" value="ECO:0007669"/>
    <property type="project" value="UniProtKB-SubCell"/>
</dbReference>
<dbReference type="GO" id="GO:0052906">
    <property type="term" value="F:tRNA (guanine(37)-N1)-methyltransferase activity"/>
    <property type="evidence" value="ECO:0007669"/>
    <property type="project" value="UniProtKB-UniRule"/>
</dbReference>
<dbReference type="GO" id="GO:0002939">
    <property type="term" value="P:tRNA N1-guanine methylation"/>
    <property type="evidence" value="ECO:0007669"/>
    <property type="project" value="TreeGrafter"/>
</dbReference>
<dbReference type="CDD" id="cd02440">
    <property type="entry name" value="AdoMet_MTases"/>
    <property type="match status" value="1"/>
</dbReference>
<dbReference type="FunFam" id="3.30.300.110:FF:000001">
    <property type="entry name" value="tRNA (guanine(37)-N1)-methyltransferase"/>
    <property type="match status" value="1"/>
</dbReference>
<dbReference type="Gene3D" id="3.30.300.110">
    <property type="entry name" value="Met-10+ protein-like domains"/>
    <property type="match status" value="1"/>
</dbReference>
<dbReference type="Gene3D" id="3.40.50.150">
    <property type="entry name" value="Vaccinia Virus protein VP39"/>
    <property type="match status" value="1"/>
</dbReference>
<dbReference type="HAMAP" id="MF_03152">
    <property type="entry name" value="TRM5"/>
    <property type="match status" value="1"/>
</dbReference>
<dbReference type="InterPro" id="IPR030382">
    <property type="entry name" value="MeTrfase_TRM5/TYW2"/>
</dbReference>
<dbReference type="InterPro" id="IPR029063">
    <property type="entry name" value="SAM-dependent_MTases_sf"/>
</dbReference>
<dbReference type="InterPro" id="IPR056743">
    <property type="entry name" value="TRM5-TYW2-like_MTfase"/>
</dbReference>
<dbReference type="InterPro" id="IPR056744">
    <property type="entry name" value="TRM5/TYW2-like_N"/>
</dbReference>
<dbReference type="InterPro" id="IPR025792">
    <property type="entry name" value="tRNA_Gua_MeTrfase_euk"/>
</dbReference>
<dbReference type="PANTHER" id="PTHR23245:SF36">
    <property type="entry name" value="TRNA (GUANINE(37)-N1)-METHYLTRANSFERASE"/>
    <property type="match status" value="1"/>
</dbReference>
<dbReference type="PANTHER" id="PTHR23245">
    <property type="entry name" value="TRNA METHYLTRANSFERASE"/>
    <property type="match status" value="1"/>
</dbReference>
<dbReference type="Pfam" id="PF02475">
    <property type="entry name" value="TRM5-TYW2_MTfase"/>
    <property type="match status" value="1"/>
</dbReference>
<dbReference type="Pfam" id="PF25133">
    <property type="entry name" value="TYW2_N_2"/>
    <property type="match status" value="1"/>
</dbReference>
<dbReference type="SUPFAM" id="SSF53335">
    <property type="entry name" value="S-adenosyl-L-methionine-dependent methyltransferases"/>
    <property type="match status" value="1"/>
</dbReference>
<dbReference type="PROSITE" id="PS51684">
    <property type="entry name" value="SAM_MT_TRM5_TYW2"/>
    <property type="match status" value="1"/>
</dbReference>
<comment type="function">
    <text evidence="1">Specifically methylates the N1 position of guanosine-37 in various cytoplasmic and mitochondrial tRNAs. Methylation is not dependent on the nature of the nucleoside 5' of the target nucleoside. This is the first step in the biosynthesis of wybutosine (yW), a modified base adjacent to the anticodon of tRNAs and required for accurate decoding.</text>
</comment>
<comment type="catalytic activity">
    <reaction evidence="1">
        <text>guanosine(37) in tRNA + S-adenosyl-L-methionine = N(1)-methylguanosine(37) in tRNA + S-adenosyl-L-homocysteine + H(+)</text>
        <dbReference type="Rhea" id="RHEA:36899"/>
        <dbReference type="Rhea" id="RHEA-COMP:10145"/>
        <dbReference type="Rhea" id="RHEA-COMP:10147"/>
        <dbReference type="ChEBI" id="CHEBI:15378"/>
        <dbReference type="ChEBI" id="CHEBI:57856"/>
        <dbReference type="ChEBI" id="CHEBI:59789"/>
        <dbReference type="ChEBI" id="CHEBI:73542"/>
        <dbReference type="ChEBI" id="CHEBI:74269"/>
        <dbReference type="EC" id="2.1.1.228"/>
    </reaction>
</comment>
<comment type="subunit">
    <text evidence="1">Monomer.</text>
</comment>
<comment type="subcellular location">
    <subcellularLocation>
        <location evidence="1">Mitochondrion matrix</location>
    </subcellularLocation>
    <subcellularLocation>
        <location evidence="1">Nucleus</location>
    </subcellularLocation>
    <subcellularLocation>
        <location evidence="1">Cytoplasm</location>
    </subcellularLocation>
    <text evidence="1">Predominantly in the mitochondria and in the nucleus.</text>
</comment>
<comment type="similarity">
    <text evidence="2">Belongs to the class I-like SAM-binding methyltransferase superfamily. TRM5/TYW2 family.</text>
</comment>
<keyword id="KW-0963">Cytoplasm</keyword>
<keyword id="KW-0489">Methyltransferase</keyword>
<keyword id="KW-0496">Mitochondrion</keyword>
<keyword id="KW-0539">Nucleus</keyword>
<keyword id="KW-1185">Reference proteome</keyword>
<keyword id="KW-0949">S-adenosyl-L-methionine</keyword>
<keyword id="KW-0808">Transferase</keyword>
<keyword id="KW-0819">tRNA processing</keyword>